<keyword id="KW-0067">ATP-binding</keyword>
<keyword id="KW-1003">Cell membrane</keyword>
<keyword id="KW-0225">Disease variant</keyword>
<keyword id="KW-0325">Glycoprotein</keyword>
<keyword id="KW-0445">Lipid transport</keyword>
<keyword id="KW-0449">Lipoprotein</keyword>
<keyword id="KW-0460">Magnesium</keyword>
<keyword id="KW-0472">Membrane</keyword>
<keyword id="KW-0479">Metal-binding</keyword>
<keyword id="KW-0547">Nucleotide-binding</keyword>
<keyword id="KW-0564">Palmitate</keyword>
<keyword id="KW-1185">Reference proteome</keyword>
<keyword id="KW-1278">Translocase</keyword>
<keyword id="KW-0812">Transmembrane</keyword>
<keyword id="KW-1133">Transmembrane helix</keyword>
<keyword id="KW-0813">Transport</keyword>
<name>ABCG5_MOUSE</name>
<dbReference type="EC" id="7.6.2.-" evidence="16"/>
<dbReference type="EMBL" id="AF312713">
    <property type="protein sequence ID" value="AAG53097.1"/>
    <property type="molecule type" value="mRNA"/>
</dbReference>
<dbReference type="EMBL" id="AH011511">
    <property type="protein sequence ID" value="AAL82586.1"/>
    <property type="molecule type" value="Genomic_DNA"/>
</dbReference>
<dbReference type="EMBL" id="AF351786">
    <property type="protein sequence ID" value="AAL82586.1"/>
    <property type="status" value="JOINED"/>
    <property type="molecule type" value="Genomic_DNA"/>
</dbReference>
<dbReference type="EMBL" id="AF351787">
    <property type="protein sequence ID" value="AAL82586.1"/>
    <property type="status" value="JOINED"/>
    <property type="molecule type" value="Genomic_DNA"/>
</dbReference>
<dbReference type="EMBL" id="AF351789">
    <property type="protein sequence ID" value="AAL82586.1"/>
    <property type="status" value="JOINED"/>
    <property type="molecule type" value="Genomic_DNA"/>
</dbReference>
<dbReference type="EMBL" id="AF351790">
    <property type="protein sequence ID" value="AAL82586.1"/>
    <property type="status" value="JOINED"/>
    <property type="molecule type" value="Genomic_DNA"/>
</dbReference>
<dbReference type="EMBL" id="AF351791">
    <property type="protein sequence ID" value="AAL82586.1"/>
    <property type="status" value="JOINED"/>
    <property type="molecule type" value="Genomic_DNA"/>
</dbReference>
<dbReference type="EMBL" id="AF351792">
    <property type="protein sequence ID" value="AAL82586.1"/>
    <property type="status" value="JOINED"/>
    <property type="molecule type" value="Genomic_DNA"/>
</dbReference>
<dbReference type="EMBL" id="AF351793">
    <property type="protein sequence ID" value="AAL82586.1"/>
    <property type="status" value="JOINED"/>
    <property type="molecule type" value="Genomic_DNA"/>
</dbReference>
<dbReference type="EMBL" id="AF351794">
    <property type="protein sequence ID" value="AAL82586.1"/>
    <property type="status" value="JOINED"/>
    <property type="molecule type" value="Genomic_DNA"/>
</dbReference>
<dbReference type="EMBL" id="AF351795">
    <property type="protein sequence ID" value="AAL82586.1"/>
    <property type="status" value="JOINED"/>
    <property type="molecule type" value="Genomic_DNA"/>
</dbReference>
<dbReference type="EMBL" id="AF351796">
    <property type="protein sequence ID" value="AAL82586.1"/>
    <property type="status" value="JOINED"/>
    <property type="molecule type" value="Genomic_DNA"/>
</dbReference>
<dbReference type="EMBL" id="AF351797">
    <property type="protein sequence ID" value="AAL82586.1"/>
    <property type="status" value="JOINED"/>
    <property type="molecule type" value="Genomic_DNA"/>
</dbReference>
<dbReference type="EMBL" id="AY195873">
    <property type="protein sequence ID" value="AAO45094.1"/>
    <property type="molecule type" value="mRNA"/>
</dbReference>
<dbReference type="EMBL" id="AK149569">
    <property type="protein sequence ID" value="BAE28965.1"/>
    <property type="molecule type" value="mRNA"/>
</dbReference>
<dbReference type="EMBL" id="CH466537">
    <property type="protein sequence ID" value="EDL38580.1"/>
    <property type="molecule type" value="Genomic_DNA"/>
</dbReference>
<dbReference type="EMBL" id="BC106766">
    <property type="protein sequence ID" value="AAI06767.1"/>
    <property type="molecule type" value="mRNA"/>
</dbReference>
<dbReference type="CCDS" id="CCDS29001.1"/>
<dbReference type="RefSeq" id="NP_114090.1">
    <property type="nucleotide sequence ID" value="NM_031884.2"/>
</dbReference>
<dbReference type="SMR" id="Q99PE8"/>
<dbReference type="BioGRID" id="205215">
    <property type="interactions" value="1"/>
</dbReference>
<dbReference type="CORUM" id="Q99PE8"/>
<dbReference type="FunCoup" id="Q99PE8">
    <property type="interactions" value="87"/>
</dbReference>
<dbReference type="STRING" id="10090.ENSMUSP00000069495"/>
<dbReference type="GlyCosmos" id="Q99PE8">
    <property type="glycosylation" value="3 sites, No reported glycans"/>
</dbReference>
<dbReference type="GlyGen" id="Q99PE8">
    <property type="glycosylation" value="3 sites"/>
</dbReference>
<dbReference type="iPTMnet" id="Q99PE8"/>
<dbReference type="PhosphoSitePlus" id="Q99PE8"/>
<dbReference type="SwissPalm" id="Q99PE8"/>
<dbReference type="jPOST" id="Q99PE8"/>
<dbReference type="PaxDb" id="10090-ENSMUSP00000069495"/>
<dbReference type="ProteomicsDB" id="285820"/>
<dbReference type="Antibodypedia" id="14899">
    <property type="antibodies" value="228 antibodies from 31 providers"/>
</dbReference>
<dbReference type="DNASU" id="27409"/>
<dbReference type="Ensembl" id="ENSMUST00000066175.10">
    <property type="protein sequence ID" value="ENSMUSP00000069495.4"/>
    <property type="gene ID" value="ENSMUSG00000040505.14"/>
</dbReference>
<dbReference type="GeneID" id="27409"/>
<dbReference type="KEGG" id="mmu:27409"/>
<dbReference type="UCSC" id="uc008dsz.1">
    <property type="organism name" value="mouse"/>
</dbReference>
<dbReference type="AGR" id="MGI:1351659"/>
<dbReference type="CTD" id="64240"/>
<dbReference type="MGI" id="MGI:1351659">
    <property type="gene designation" value="Abcg5"/>
</dbReference>
<dbReference type="VEuPathDB" id="HostDB:ENSMUSG00000040505"/>
<dbReference type="eggNOG" id="KOG0061">
    <property type="taxonomic scope" value="Eukaryota"/>
</dbReference>
<dbReference type="GeneTree" id="ENSGT00940000157985"/>
<dbReference type="HOGENOM" id="CLU_000604_57_9_1"/>
<dbReference type="InParanoid" id="Q99PE8"/>
<dbReference type="OMA" id="RVRPWWD"/>
<dbReference type="OrthoDB" id="66620at2759"/>
<dbReference type="PhylomeDB" id="Q99PE8"/>
<dbReference type="TreeFam" id="TF105212"/>
<dbReference type="Reactome" id="R-MMU-1369062">
    <property type="pathway name" value="ABC transporters in lipid homeostasis"/>
</dbReference>
<dbReference type="BioGRID-ORCS" id="27409">
    <property type="hits" value="2 hits in 79 CRISPR screens"/>
</dbReference>
<dbReference type="ChiTaRS" id="Abcg5">
    <property type="organism name" value="mouse"/>
</dbReference>
<dbReference type="PRO" id="PR:Q99PE8"/>
<dbReference type="Proteomes" id="UP000000589">
    <property type="component" value="Chromosome 17"/>
</dbReference>
<dbReference type="RNAct" id="Q99PE8">
    <property type="molecule type" value="protein"/>
</dbReference>
<dbReference type="Bgee" id="ENSMUSG00000040505">
    <property type="expression patterns" value="Expressed in small intestine Peyer's patch and 59 other cell types or tissues"/>
</dbReference>
<dbReference type="ExpressionAtlas" id="Q99PE8">
    <property type="expression patterns" value="baseline and differential"/>
</dbReference>
<dbReference type="GO" id="GO:0045177">
    <property type="term" value="C:apical part of cell"/>
    <property type="evidence" value="ECO:0000314"/>
    <property type="project" value="MGI"/>
</dbReference>
<dbReference type="GO" id="GO:0016324">
    <property type="term" value="C:apical plasma membrane"/>
    <property type="evidence" value="ECO:0000314"/>
    <property type="project" value="UniProtKB"/>
</dbReference>
<dbReference type="GO" id="GO:0043190">
    <property type="term" value="C:ATP-binding cassette (ABC) transporter complex"/>
    <property type="evidence" value="ECO:0007669"/>
    <property type="project" value="Ensembl"/>
</dbReference>
<dbReference type="GO" id="GO:0016020">
    <property type="term" value="C:membrane"/>
    <property type="evidence" value="ECO:0000314"/>
    <property type="project" value="MGI"/>
</dbReference>
<dbReference type="GO" id="GO:0005886">
    <property type="term" value="C:plasma membrane"/>
    <property type="evidence" value="ECO:0000314"/>
    <property type="project" value="UniProtKB"/>
</dbReference>
<dbReference type="GO" id="GO:0043235">
    <property type="term" value="C:receptor complex"/>
    <property type="evidence" value="ECO:0000314"/>
    <property type="project" value="BHF-UCL"/>
</dbReference>
<dbReference type="GO" id="GO:0140359">
    <property type="term" value="F:ABC-type transporter activity"/>
    <property type="evidence" value="ECO:0007669"/>
    <property type="project" value="InterPro"/>
</dbReference>
<dbReference type="GO" id="GO:0005524">
    <property type="term" value="F:ATP binding"/>
    <property type="evidence" value="ECO:0007669"/>
    <property type="project" value="UniProtKB-KW"/>
</dbReference>
<dbReference type="GO" id="GO:0016887">
    <property type="term" value="F:ATP hydrolysis activity"/>
    <property type="evidence" value="ECO:0007669"/>
    <property type="project" value="Ensembl"/>
</dbReference>
<dbReference type="GO" id="GO:0120020">
    <property type="term" value="F:cholesterol transfer activity"/>
    <property type="evidence" value="ECO:0007669"/>
    <property type="project" value="Ensembl"/>
</dbReference>
<dbReference type="GO" id="GO:0046872">
    <property type="term" value="F:metal ion binding"/>
    <property type="evidence" value="ECO:0007669"/>
    <property type="project" value="UniProtKB-KW"/>
</dbReference>
<dbReference type="GO" id="GO:0046982">
    <property type="term" value="F:protein heterodimerization activity"/>
    <property type="evidence" value="ECO:0000314"/>
    <property type="project" value="UniProtKB"/>
</dbReference>
<dbReference type="GO" id="GO:0033344">
    <property type="term" value="P:cholesterol efflux"/>
    <property type="evidence" value="ECO:0000315"/>
    <property type="project" value="BHF-UCL"/>
</dbReference>
<dbReference type="GO" id="GO:0042632">
    <property type="term" value="P:cholesterol homeostasis"/>
    <property type="evidence" value="ECO:0007669"/>
    <property type="project" value="Ensembl"/>
</dbReference>
<dbReference type="GO" id="GO:0030299">
    <property type="term" value="P:intestinal cholesterol absorption"/>
    <property type="evidence" value="ECO:0000305"/>
    <property type="project" value="BHF-UCL"/>
</dbReference>
<dbReference type="GO" id="GO:0045796">
    <property type="term" value="P:negative regulation of intestinal cholesterol absorption"/>
    <property type="evidence" value="ECO:0007669"/>
    <property type="project" value="Ensembl"/>
</dbReference>
<dbReference type="GO" id="GO:0010949">
    <property type="term" value="P:negative regulation of intestinal phytosterol absorption"/>
    <property type="evidence" value="ECO:0007669"/>
    <property type="project" value="Ensembl"/>
</dbReference>
<dbReference type="GO" id="GO:0010212">
    <property type="term" value="P:response to ionizing radiation"/>
    <property type="evidence" value="ECO:0007669"/>
    <property type="project" value="Ensembl"/>
</dbReference>
<dbReference type="GO" id="GO:0014850">
    <property type="term" value="P:response to muscle activity"/>
    <property type="evidence" value="ECO:0007669"/>
    <property type="project" value="Ensembl"/>
</dbReference>
<dbReference type="GO" id="GO:0007584">
    <property type="term" value="P:response to nutrient"/>
    <property type="evidence" value="ECO:0007669"/>
    <property type="project" value="Ensembl"/>
</dbReference>
<dbReference type="GO" id="GO:0009410">
    <property type="term" value="P:response to xenobiotic stimulus"/>
    <property type="evidence" value="ECO:0007669"/>
    <property type="project" value="Ensembl"/>
</dbReference>
<dbReference type="GO" id="GO:0015918">
    <property type="term" value="P:sterol transport"/>
    <property type="evidence" value="ECO:0000314"/>
    <property type="project" value="UniProtKB"/>
</dbReference>
<dbReference type="GO" id="GO:0070328">
    <property type="term" value="P:triglyceride homeostasis"/>
    <property type="evidence" value="ECO:0007669"/>
    <property type="project" value="Ensembl"/>
</dbReference>
<dbReference type="CDD" id="cd03234">
    <property type="entry name" value="ABCG_White"/>
    <property type="match status" value="1"/>
</dbReference>
<dbReference type="FunFam" id="3.40.50.300:FF:001069">
    <property type="entry name" value="ATP-binding cassette, sub-family G (WHITE), member 5"/>
    <property type="match status" value="1"/>
</dbReference>
<dbReference type="Gene3D" id="3.40.50.300">
    <property type="entry name" value="P-loop containing nucleotide triphosphate hydrolases"/>
    <property type="match status" value="1"/>
</dbReference>
<dbReference type="InterPro" id="IPR003593">
    <property type="entry name" value="AAA+_ATPase"/>
</dbReference>
<dbReference type="InterPro" id="IPR013525">
    <property type="entry name" value="ABC2_TM"/>
</dbReference>
<dbReference type="InterPro" id="IPR003439">
    <property type="entry name" value="ABC_transporter-like_ATP-bd"/>
</dbReference>
<dbReference type="InterPro" id="IPR017871">
    <property type="entry name" value="ABC_transporter-like_CS"/>
</dbReference>
<dbReference type="InterPro" id="IPR043926">
    <property type="entry name" value="ABCG_dom"/>
</dbReference>
<dbReference type="InterPro" id="IPR050352">
    <property type="entry name" value="ABCG_transporters"/>
</dbReference>
<dbReference type="InterPro" id="IPR027417">
    <property type="entry name" value="P-loop_NTPase"/>
</dbReference>
<dbReference type="PANTHER" id="PTHR48041">
    <property type="entry name" value="ABC TRANSPORTER G FAMILY MEMBER 28"/>
    <property type="match status" value="1"/>
</dbReference>
<dbReference type="PANTHER" id="PTHR48041:SF113">
    <property type="entry name" value="ATP-BINDING CASSETTE SUB-FAMILY G MEMBER 5"/>
    <property type="match status" value="1"/>
</dbReference>
<dbReference type="Pfam" id="PF01061">
    <property type="entry name" value="ABC2_membrane"/>
    <property type="match status" value="1"/>
</dbReference>
<dbReference type="Pfam" id="PF19055">
    <property type="entry name" value="ABC2_membrane_7"/>
    <property type="match status" value="1"/>
</dbReference>
<dbReference type="Pfam" id="PF00005">
    <property type="entry name" value="ABC_tran"/>
    <property type="match status" value="1"/>
</dbReference>
<dbReference type="SMART" id="SM00382">
    <property type="entry name" value="AAA"/>
    <property type="match status" value="1"/>
</dbReference>
<dbReference type="SUPFAM" id="SSF52540">
    <property type="entry name" value="P-loop containing nucleoside triphosphate hydrolases"/>
    <property type="match status" value="1"/>
</dbReference>
<dbReference type="PROSITE" id="PS00211">
    <property type="entry name" value="ABC_TRANSPORTER_1"/>
    <property type="match status" value="1"/>
</dbReference>
<dbReference type="PROSITE" id="PS50893">
    <property type="entry name" value="ABC_TRANSPORTER_2"/>
    <property type="match status" value="1"/>
</dbReference>
<evidence type="ECO:0000250" key="1">
    <source>
        <dbReference type="UniProtKB" id="Q9H222"/>
    </source>
</evidence>
<evidence type="ECO:0000255" key="2"/>
<evidence type="ECO:0000255" key="3">
    <source>
        <dbReference type="PROSITE-ProRule" id="PRU00434"/>
    </source>
</evidence>
<evidence type="ECO:0000256" key="4">
    <source>
        <dbReference type="SAM" id="MobiDB-lite"/>
    </source>
</evidence>
<evidence type="ECO:0000269" key="5">
    <source>
    </source>
</evidence>
<evidence type="ECO:0000269" key="6">
    <source>
    </source>
</evidence>
<evidence type="ECO:0000269" key="7">
    <source>
    </source>
</evidence>
<evidence type="ECO:0000269" key="8">
    <source>
    </source>
</evidence>
<evidence type="ECO:0000269" key="9">
    <source>
    </source>
</evidence>
<evidence type="ECO:0000269" key="10">
    <source>
    </source>
</evidence>
<evidence type="ECO:0000269" key="11">
    <source>
    </source>
</evidence>
<evidence type="ECO:0000269" key="12">
    <source>
    </source>
</evidence>
<evidence type="ECO:0000269" key="13">
    <source>
    </source>
</evidence>
<evidence type="ECO:0000269" key="14">
    <source>
    </source>
</evidence>
<evidence type="ECO:0000269" key="15">
    <source>
    </source>
</evidence>
<evidence type="ECO:0000269" key="16">
    <source>
    </source>
</evidence>
<evidence type="ECO:0000269" key="17">
    <source>
    </source>
</evidence>
<evidence type="ECO:0000269" key="18">
    <source>
    </source>
</evidence>
<evidence type="ECO:0000269" key="19">
    <source>
    </source>
</evidence>
<evidence type="ECO:0000303" key="20">
    <source>
    </source>
</evidence>
<evidence type="ECO:0000303" key="21">
    <source>
    </source>
</evidence>
<evidence type="ECO:0000305" key="22"/>
<evidence type="ECO:0000305" key="23">
    <source>
    </source>
</evidence>
<evidence type="ECO:0000312" key="24">
    <source>
        <dbReference type="EMBL" id="AAL82586.1"/>
    </source>
</evidence>
<evidence type="ECO:0000312" key="25">
    <source>
        <dbReference type="EMBL" id="AAO45094.1"/>
    </source>
</evidence>
<evidence type="ECO:0000312" key="26">
    <source>
        <dbReference type="EMBL" id="BAE28965.1"/>
    </source>
</evidence>
<evidence type="ECO:0000312" key="27">
    <source>
        <dbReference type="MGI" id="MGI:1351659"/>
    </source>
</evidence>
<organism>
    <name type="scientific">Mus musculus</name>
    <name type="common">Mouse</name>
    <dbReference type="NCBI Taxonomy" id="10090"/>
    <lineage>
        <taxon>Eukaryota</taxon>
        <taxon>Metazoa</taxon>
        <taxon>Chordata</taxon>
        <taxon>Craniata</taxon>
        <taxon>Vertebrata</taxon>
        <taxon>Euteleostomi</taxon>
        <taxon>Mammalia</taxon>
        <taxon>Eutheria</taxon>
        <taxon>Euarchontoglires</taxon>
        <taxon>Glires</taxon>
        <taxon>Rodentia</taxon>
        <taxon>Myomorpha</taxon>
        <taxon>Muroidea</taxon>
        <taxon>Muridae</taxon>
        <taxon>Murinae</taxon>
        <taxon>Mus</taxon>
        <taxon>Mus</taxon>
    </lineage>
</organism>
<accession>Q99PE8</accession>
<accession>Q540E8</accession>
<reference key="1">
    <citation type="journal article" date="2001" name="Nat. Genet.">
        <title>Identification of a gene, ABCG5, important in the regulation of dietary cholesterol absorption.</title>
        <authorList>
            <person name="Lee M.-H."/>
            <person name="Lu K."/>
            <person name="Hazard S."/>
            <person name="Yu H."/>
            <person name="Shulenin S."/>
            <person name="Hidaka H."/>
            <person name="Kojima H."/>
            <person name="Allikmets R."/>
            <person name="Sakuma N."/>
            <person name="Pegoraro R."/>
            <person name="Srivastava A.K."/>
            <person name="Salen G."/>
            <person name="Dean M."/>
            <person name="Patel S.B."/>
        </authorList>
    </citation>
    <scope>NUCLEOTIDE SEQUENCE [MRNA]</scope>
    <scope>TISSUE SPECIFICITY</scope>
    <source>
        <strain>C57BL/6J</strain>
        <tissue>Liver</tissue>
    </source>
</reference>
<reference evidence="24" key="2">
    <citation type="journal article" date="2002" name="J. Lipid Res.">
        <title>Molecular cloning, genomic organization, genetic variations, and characterization of murine sterolin genes Abcg5 and Abcg8.</title>
        <authorList>
            <person name="Lu K."/>
            <person name="Lee M.H."/>
            <person name="Yu H."/>
            <person name="Zhou Y."/>
            <person name="Sandell S.A."/>
            <person name="Salen G."/>
            <person name="Patel S.B."/>
        </authorList>
    </citation>
    <scope>NUCLEOTIDE SEQUENCE [GENOMIC DNA]</scope>
    <scope>TISSUE SPECIFICITY</scope>
    <source>
        <strain evidence="24">129/Sv</strain>
    </source>
</reference>
<reference evidence="25" key="3">
    <citation type="journal article" date="2003" name="Gastroenterology">
        <title>FXR and ABCG5/ABCG8 as determinants of cholesterol gallstone formation from quantitative trait locus mapping in mice.</title>
        <authorList>
            <person name="Wittenburg H."/>
            <person name="Lyons M.A."/>
            <person name="Li R."/>
            <person name="Churchill G.A."/>
            <person name="Carey M.C."/>
            <person name="Paigen B."/>
        </authorList>
    </citation>
    <scope>NUCLEOTIDE SEQUENCE [MRNA]</scope>
    <scope>TISSUE SPECIFICITY</scope>
    <source>
        <strain evidence="25">PERA/Ei</strain>
        <tissue evidence="25">Liver</tissue>
    </source>
</reference>
<reference key="4">
    <citation type="journal article" date="2005" name="Science">
        <title>The transcriptional landscape of the mammalian genome.</title>
        <authorList>
            <person name="Carninci P."/>
            <person name="Kasukawa T."/>
            <person name="Katayama S."/>
            <person name="Gough J."/>
            <person name="Frith M.C."/>
            <person name="Maeda N."/>
            <person name="Oyama R."/>
            <person name="Ravasi T."/>
            <person name="Lenhard B."/>
            <person name="Wells C."/>
            <person name="Kodzius R."/>
            <person name="Shimokawa K."/>
            <person name="Bajic V.B."/>
            <person name="Brenner S.E."/>
            <person name="Batalov S."/>
            <person name="Forrest A.R."/>
            <person name="Zavolan M."/>
            <person name="Davis M.J."/>
            <person name="Wilming L.G."/>
            <person name="Aidinis V."/>
            <person name="Allen J.E."/>
            <person name="Ambesi-Impiombato A."/>
            <person name="Apweiler R."/>
            <person name="Aturaliya R.N."/>
            <person name="Bailey T.L."/>
            <person name="Bansal M."/>
            <person name="Baxter L."/>
            <person name="Beisel K.W."/>
            <person name="Bersano T."/>
            <person name="Bono H."/>
            <person name="Chalk A.M."/>
            <person name="Chiu K.P."/>
            <person name="Choudhary V."/>
            <person name="Christoffels A."/>
            <person name="Clutterbuck D.R."/>
            <person name="Crowe M.L."/>
            <person name="Dalla E."/>
            <person name="Dalrymple B.P."/>
            <person name="de Bono B."/>
            <person name="Della Gatta G."/>
            <person name="di Bernardo D."/>
            <person name="Down T."/>
            <person name="Engstrom P."/>
            <person name="Fagiolini M."/>
            <person name="Faulkner G."/>
            <person name="Fletcher C.F."/>
            <person name="Fukushima T."/>
            <person name="Furuno M."/>
            <person name="Futaki S."/>
            <person name="Gariboldi M."/>
            <person name="Georgii-Hemming P."/>
            <person name="Gingeras T.R."/>
            <person name="Gojobori T."/>
            <person name="Green R.E."/>
            <person name="Gustincich S."/>
            <person name="Harbers M."/>
            <person name="Hayashi Y."/>
            <person name="Hensch T.K."/>
            <person name="Hirokawa N."/>
            <person name="Hill D."/>
            <person name="Huminiecki L."/>
            <person name="Iacono M."/>
            <person name="Ikeo K."/>
            <person name="Iwama A."/>
            <person name="Ishikawa T."/>
            <person name="Jakt M."/>
            <person name="Kanapin A."/>
            <person name="Katoh M."/>
            <person name="Kawasawa Y."/>
            <person name="Kelso J."/>
            <person name="Kitamura H."/>
            <person name="Kitano H."/>
            <person name="Kollias G."/>
            <person name="Krishnan S.P."/>
            <person name="Kruger A."/>
            <person name="Kummerfeld S.K."/>
            <person name="Kurochkin I.V."/>
            <person name="Lareau L.F."/>
            <person name="Lazarevic D."/>
            <person name="Lipovich L."/>
            <person name="Liu J."/>
            <person name="Liuni S."/>
            <person name="McWilliam S."/>
            <person name="Madan Babu M."/>
            <person name="Madera M."/>
            <person name="Marchionni L."/>
            <person name="Matsuda H."/>
            <person name="Matsuzawa S."/>
            <person name="Miki H."/>
            <person name="Mignone F."/>
            <person name="Miyake S."/>
            <person name="Morris K."/>
            <person name="Mottagui-Tabar S."/>
            <person name="Mulder N."/>
            <person name="Nakano N."/>
            <person name="Nakauchi H."/>
            <person name="Ng P."/>
            <person name="Nilsson R."/>
            <person name="Nishiguchi S."/>
            <person name="Nishikawa S."/>
            <person name="Nori F."/>
            <person name="Ohara O."/>
            <person name="Okazaki Y."/>
            <person name="Orlando V."/>
            <person name="Pang K.C."/>
            <person name="Pavan W.J."/>
            <person name="Pavesi G."/>
            <person name="Pesole G."/>
            <person name="Petrovsky N."/>
            <person name="Piazza S."/>
            <person name="Reed J."/>
            <person name="Reid J.F."/>
            <person name="Ring B.Z."/>
            <person name="Ringwald M."/>
            <person name="Rost B."/>
            <person name="Ruan Y."/>
            <person name="Salzberg S.L."/>
            <person name="Sandelin A."/>
            <person name="Schneider C."/>
            <person name="Schoenbach C."/>
            <person name="Sekiguchi K."/>
            <person name="Semple C.A."/>
            <person name="Seno S."/>
            <person name="Sessa L."/>
            <person name="Sheng Y."/>
            <person name="Shibata Y."/>
            <person name="Shimada H."/>
            <person name="Shimada K."/>
            <person name="Silva D."/>
            <person name="Sinclair B."/>
            <person name="Sperling S."/>
            <person name="Stupka E."/>
            <person name="Sugiura K."/>
            <person name="Sultana R."/>
            <person name="Takenaka Y."/>
            <person name="Taki K."/>
            <person name="Tammoja K."/>
            <person name="Tan S.L."/>
            <person name="Tang S."/>
            <person name="Taylor M.S."/>
            <person name="Tegner J."/>
            <person name="Teichmann S.A."/>
            <person name="Ueda H.R."/>
            <person name="van Nimwegen E."/>
            <person name="Verardo R."/>
            <person name="Wei C.L."/>
            <person name="Yagi K."/>
            <person name="Yamanishi H."/>
            <person name="Zabarovsky E."/>
            <person name="Zhu S."/>
            <person name="Zimmer A."/>
            <person name="Hide W."/>
            <person name="Bult C."/>
            <person name="Grimmond S.M."/>
            <person name="Teasdale R.D."/>
            <person name="Liu E.T."/>
            <person name="Brusic V."/>
            <person name="Quackenbush J."/>
            <person name="Wahlestedt C."/>
            <person name="Mattick J.S."/>
            <person name="Hume D.A."/>
            <person name="Kai C."/>
            <person name="Sasaki D."/>
            <person name="Tomaru Y."/>
            <person name="Fukuda S."/>
            <person name="Kanamori-Katayama M."/>
            <person name="Suzuki M."/>
            <person name="Aoki J."/>
            <person name="Arakawa T."/>
            <person name="Iida J."/>
            <person name="Imamura K."/>
            <person name="Itoh M."/>
            <person name="Kato T."/>
            <person name="Kawaji H."/>
            <person name="Kawagashira N."/>
            <person name="Kawashima T."/>
            <person name="Kojima M."/>
            <person name="Kondo S."/>
            <person name="Konno H."/>
            <person name="Nakano K."/>
            <person name="Ninomiya N."/>
            <person name="Nishio T."/>
            <person name="Okada M."/>
            <person name="Plessy C."/>
            <person name="Shibata K."/>
            <person name="Shiraki T."/>
            <person name="Suzuki S."/>
            <person name="Tagami M."/>
            <person name="Waki K."/>
            <person name="Watahiki A."/>
            <person name="Okamura-Oho Y."/>
            <person name="Suzuki H."/>
            <person name="Kawai J."/>
            <person name="Hayashizaki Y."/>
        </authorList>
    </citation>
    <scope>NUCLEOTIDE SEQUENCE [LARGE SCALE MRNA]</scope>
    <source>
        <strain evidence="26">C57BL/6J</strain>
        <tissue evidence="26">Liver</tissue>
    </source>
</reference>
<reference key="5">
    <citation type="submission" date="2005-07" db="EMBL/GenBank/DDBJ databases">
        <authorList>
            <person name="Mural R.J."/>
            <person name="Adams M.D."/>
            <person name="Myers E.W."/>
            <person name="Smith H.O."/>
            <person name="Venter J.C."/>
        </authorList>
    </citation>
    <scope>NUCLEOTIDE SEQUENCE [LARGE SCALE GENOMIC DNA]</scope>
</reference>
<reference key="6">
    <citation type="journal article" date="2004" name="Genome Res.">
        <title>The status, quality, and expansion of the NIH full-length cDNA project: the Mammalian Gene Collection (MGC).</title>
        <authorList>
            <consortium name="The MGC Project Team"/>
        </authorList>
    </citation>
    <scope>NUCLEOTIDE SEQUENCE [LARGE SCALE MRNA]</scope>
</reference>
<reference key="7">
    <citation type="journal article" date="2000" name="Science">
        <title>Accumulation of dietary cholesterol in sitosterolemia caused by mutations in adjacent ABC transporters.</title>
        <authorList>
            <person name="Berge K.E."/>
            <person name="Tian H."/>
            <person name="Graf G.A."/>
            <person name="Yu L."/>
            <person name="Grishin N.V."/>
            <person name="Schultz J."/>
            <person name="Kwiterovich P."/>
            <person name="Shan B."/>
            <person name="Barnes R."/>
            <person name="Hobbs H.H."/>
        </authorList>
    </citation>
    <scope>TISSUE SPECIFICITY</scope>
    <scope>INDUCTION</scope>
</reference>
<reference key="8">
    <citation type="journal article" date="2002" name="J. Clin. Invest.">
        <title>Coexpression of ATP-binding cassette proteins ABCG5 and ABCG8 permits their transport to the apical surface.</title>
        <authorList>
            <person name="Graf G.A."/>
            <person name="Li W.P."/>
            <person name="Gerard R.D."/>
            <person name="Gelissen I."/>
            <person name="White A."/>
            <person name="Cohen J.C."/>
            <person name="Hobbs H.H."/>
        </authorList>
    </citation>
    <scope>SUBUNIT</scope>
    <scope>SUBCELLULAR LOCATION</scope>
    <scope>GLYCOSYLATION</scope>
</reference>
<reference key="9">
    <citation type="journal article" date="2002" name="Proc. Natl. Acad. Sci. U.S.A.">
        <title>Disruption of Abcg5 and Abcg8 in mice reveals their crucial role in biliary cholesterol secretion.</title>
        <authorList>
            <person name="Yu L."/>
            <person name="Hammer R.E."/>
            <person name="Li-Hawkins J."/>
            <person name="Von Bergmann K."/>
            <person name="Lutjohann D."/>
            <person name="Cohen J.C."/>
            <person name="Hobbs H.H."/>
        </authorList>
    </citation>
    <scope>FUNCTION</scope>
    <scope>DISRUPTION PHENOTYPE</scope>
    <scope>TISSUE SPECIFICITY</scope>
    <scope>GLYCOSYLATION</scope>
</reference>
<reference key="10">
    <citation type="journal article" date="2003" name="J. Biol. Chem.">
        <title>ABCG5 and ABCG8 are obligate heterodimers for protein trafficking and biliary cholesterol excretion.</title>
        <authorList>
            <person name="Graf G.A."/>
            <person name="Yu L."/>
            <person name="Li W.P."/>
            <person name="Gerard R."/>
            <person name="Tuma P.L."/>
            <person name="Cohen J.C."/>
            <person name="Hobbs H.H."/>
        </authorList>
    </citation>
    <scope>FUNCTION</scope>
    <scope>SUBUNIT</scope>
    <scope>SUBCELLULAR LOCATION</scope>
</reference>
<reference key="11">
    <citation type="journal article" date="2003" name="J. Lipid Res.">
        <title>Endotoxin down-regulates ABCG5 and ABCG8 in mouse liver and ABCA1 and ABCG1 in J774 murine macrophages: differential role of LXR.</title>
        <authorList>
            <person name="Khovidhunkit W."/>
            <person name="Moser A.H."/>
            <person name="Shigenaga J.K."/>
            <person name="Grunfeld C."/>
            <person name="Feingold K.R."/>
        </authorList>
    </citation>
    <scope>DOWN-REGULATION BY ENDOTOXIN</scope>
    <scope>INDUCTION</scope>
</reference>
<reference key="12">
    <citation type="journal article" date="2004" name="BMC Med.">
        <title>A mouse model of sitosterolemia: absence of Abcg8/sterolin-2 results in failure to secrete biliary cholesterol.</title>
        <authorList>
            <person name="Klett E.L."/>
            <person name="Lu K."/>
            <person name="Kosters A."/>
            <person name="Vink E."/>
            <person name="Lee M.H."/>
            <person name="Altenburg M."/>
            <person name="Shefer S."/>
            <person name="Batta A.K."/>
            <person name="Yu H."/>
            <person name="Chen J."/>
            <person name="Klein R."/>
            <person name="Looije N."/>
            <person name="Oude-Elferink R."/>
            <person name="Groen A.K."/>
            <person name="Maeda N."/>
            <person name="Salen G."/>
            <person name="Patel S.B."/>
        </authorList>
    </citation>
    <scope>SUBCELLULAR LOCATION</scope>
    <scope>GLYCOSYLATION</scope>
    <scope>TISSUE SPECIFICITY</scope>
</reference>
<reference key="13">
    <citation type="journal article" date="2004" name="J. Biol. Chem.">
        <title>Missense mutations in ABCG5 and ABCG8 disrupt heterodimerization and trafficking.</title>
        <authorList>
            <person name="Graf G.A."/>
            <person name="Cohen J.C."/>
            <person name="Hobbs H.H."/>
        </authorList>
    </citation>
    <scope>SUBUNIT</scope>
    <scope>GLYCOSYLATION AT ASN-585 AND ASN-592</scope>
    <scope>MUTAGENESIS OF ASN-585 AND ASN-592</scope>
</reference>
<reference key="14">
    <citation type="journal article" date="2004" name="J. Lipid Res.">
        <title>Selective sterol accumulation in ABCG5/ABCG8-deficient mice.</title>
        <authorList>
            <person name="Yu L."/>
            <person name="von Bergmann K."/>
            <person name="Lutjohann D."/>
            <person name="Hobbs H.H."/>
            <person name="Cohen J.C."/>
        </authorList>
    </citation>
    <scope>FUNCTION</scope>
    <scope>DISRUPTION PHENOTYPE</scope>
    <scope>INDUCTION VIA THE OXYSTEROLS RECEPTOR LXR PATHWAY</scope>
</reference>
<reference key="15">
    <citation type="journal article" date="2006" name="J. Biol. Chem.">
        <title>Functional asymmetry of nucleotide-binding domains in ABCG5 and ABCG8.</title>
        <authorList>
            <person name="Zhang D.W."/>
            <person name="Graf G.A."/>
            <person name="Gerard R.D."/>
            <person name="Cohen J.C."/>
            <person name="Hobbs H.H."/>
        </authorList>
    </citation>
    <scope>FUNCTION</scope>
    <scope>SUBCELLULAR LOCATION</scope>
    <scope>SUBUNIT</scope>
    <scope>COFACTOR</scope>
    <scope>DOMAIN</scope>
    <scope>MUTAGENESIS OF LYS-93; ILE-194; SER-196; GLY-197 AND GLU-219</scope>
</reference>
<reference key="16">
    <citation type="journal article" date="2006" name="J. Biol. Chem.">
        <title>Sterol transfer by ABCG5 and ABCG8: in vitro assay and reconstitution.</title>
        <authorList>
            <person name="Wang J."/>
            <person name="Sun F."/>
            <person name="Zhang D.W."/>
            <person name="Ma Y."/>
            <person name="Xu F."/>
            <person name="Belani J.D."/>
            <person name="Cohen J.C."/>
            <person name="Hobbs H.H."/>
            <person name="Xie X.S."/>
        </authorList>
    </citation>
    <scope>FUNCTION</scope>
    <scope>SUBUNIT</scope>
    <scope>SUBCELLULAR LOCATION</scope>
    <scope>GLYCOSYLATION</scope>
    <scope>MUTAGENESIS OF LYS-93</scope>
    <scope>ACTIVITY REGULATION</scope>
    <scope>COFACTOR</scope>
    <scope>CATALYTIC ACTIVITY</scope>
</reference>
<reference key="17">
    <citation type="journal article" date="2008" name="Biochemistry">
        <title>Purification and reconstitution of sterol transfer by native mouse ABCG5 and ABCG8.</title>
        <authorList>
            <person name="Wang J."/>
            <person name="Zhang D.W."/>
            <person name="Lei Y."/>
            <person name="Xu F."/>
            <person name="Cohen J.C."/>
            <person name="Hobbs H.H."/>
            <person name="Xie X.S."/>
        </authorList>
    </citation>
    <scope>FUNCTION</scope>
    <scope>SUBCELLULAR LOCATION</scope>
    <scope>SUBUNIT</scope>
    <scope>TISSUE SPECIFICITY</scope>
    <scope>GLYCOSYLATION</scope>
    <scope>PALMITOYLATION AT CYS-61</scope>
    <scope>MUTAGENESIS OF CYS-61</scope>
</reference>
<reference key="18">
    <citation type="journal article" date="2010" name="Blood">
        <title>The mouse mutation 'thrombocytopenia and cardiomyopathy' (trac) disrupts Abcg5: a spontaneous single gene model for human hereditary phytosterolemia/sitosterolemia.</title>
        <authorList>
            <person name="Chase T.H."/>
            <person name="Lyons B.L."/>
            <person name="Bronson R.T."/>
            <person name="Foreman O."/>
            <person name="Donahue L.R."/>
            <person name="Burzenski L.M."/>
            <person name="Gott B."/>
            <person name="Lane P."/>
            <person name="Harris B."/>
            <person name="Ceglarek U."/>
            <person name="Thiery J."/>
            <person name="Wittenburg H."/>
            <person name="Thon J.N."/>
            <person name="Italiano J.E. Jr."/>
            <person name="Johnson K.R."/>
            <person name="Shultz L.D."/>
        </authorList>
    </citation>
    <scope>DISEASE</scope>
    <scope>FUNCTION</scope>
    <scope>VARIANT TRAC 492-TRP--ARG-652 DEL</scope>
    <scope>CHARACTERIZATION OF VARIANT TRAC 492-TRP--ARG-652 DEL</scope>
</reference>
<reference key="19">
    <citation type="journal article" date="2010" name="Cell">
        <title>A tissue-specific atlas of mouse protein phosphorylation and expression.</title>
        <authorList>
            <person name="Huttlin E.L."/>
            <person name="Jedrychowski M.P."/>
            <person name="Elias J.E."/>
            <person name="Goswami T."/>
            <person name="Rad R."/>
            <person name="Beausoleil S.A."/>
            <person name="Villen J."/>
            <person name="Haas W."/>
            <person name="Sowa M.E."/>
            <person name="Gygi S.P."/>
        </authorList>
    </citation>
    <scope>IDENTIFICATION BY MASS SPECTROMETRY [LARGE SCALE ANALYSIS]</scope>
    <source>
        <tissue>Liver</tissue>
    </source>
</reference>
<reference key="20">
    <citation type="journal article" date="2015" name="J. Lipid Res.">
        <title>Relative roles of ABCG5/ABCG8 in liver and intestine.</title>
        <authorList>
            <person name="Wang J."/>
            <person name="Mitsche M.A."/>
            <person name="Luetjohann D."/>
            <person name="Cohen J.C."/>
            <person name="Xie X.S."/>
            <person name="Hobbs H.H."/>
        </authorList>
    </citation>
    <scope>DISRUPTION PHENOTYPE</scope>
    <scope>FUNCTION</scope>
    <scope>TISSUE SPECIFICITY</scope>
    <scope>GLYCOSYLATION</scope>
</reference>
<comment type="function">
    <text evidence="9 11 12 15 16 17 18 19">ABCG5 and ABCG8 form an obligate heterodimer that mediates Mg(2+)- and ATP-dependent sterol transport across the cell membrane (PubMed:16352607, PubMed:16867993, PubMed:18402465). Plays an essential role in the selective transport of dietary plant sterols and cholesterol in and out of the enterocytes and in the selective sterol excretion by the liver into bile (PubMed:12444248, PubMed:14504269, PubMed:14657202, PubMed:19846887, PubMed:25378657). Required for normal sterol homeostasis (PubMed:12444248, PubMed:14657202). The heterodimer with ABCG8 has ATPase activity (PubMed:16352607, PubMed:16867993).</text>
</comment>
<comment type="catalytic activity">
    <reaction evidence="16">
        <text>cholesterol(in) + ATP + H2O = cholesterol(out) + ADP + phosphate + H(+)</text>
        <dbReference type="Rhea" id="RHEA:39051"/>
        <dbReference type="ChEBI" id="CHEBI:15377"/>
        <dbReference type="ChEBI" id="CHEBI:15378"/>
        <dbReference type="ChEBI" id="CHEBI:16113"/>
        <dbReference type="ChEBI" id="CHEBI:30616"/>
        <dbReference type="ChEBI" id="CHEBI:43474"/>
        <dbReference type="ChEBI" id="CHEBI:456216"/>
    </reaction>
    <physiologicalReaction direction="left-to-right" evidence="16">
        <dbReference type="Rhea" id="RHEA:39052"/>
    </physiologicalReaction>
</comment>
<comment type="catalytic activity">
    <reaction evidence="16">
        <text>sitosterol(in) + ATP + H2O = sitosterol(out) + ADP + phosphate + H(+)</text>
        <dbReference type="Rhea" id="RHEA:39103"/>
        <dbReference type="ChEBI" id="CHEBI:15377"/>
        <dbReference type="ChEBI" id="CHEBI:15378"/>
        <dbReference type="ChEBI" id="CHEBI:27693"/>
        <dbReference type="ChEBI" id="CHEBI:30616"/>
        <dbReference type="ChEBI" id="CHEBI:43474"/>
        <dbReference type="ChEBI" id="CHEBI:456216"/>
    </reaction>
    <physiologicalReaction direction="left-to-right" evidence="16">
        <dbReference type="Rhea" id="RHEA:39104"/>
    </physiologicalReaction>
</comment>
<comment type="cofactor">
    <cofactor evidence="15 16">
        <name>Mg(2+)</name>
        <dbReference type="ChEBI" id="CHEBI:18420"/>
    </cofactor>
</comment>
<comment type="activity regulation">
    <text evidence="16">Cholesterol transport is inhibited by vanadate and by beryllium fluoride.</text>
</comment>
<comment type="subunit">
    <text evidence="8 11 14 15 16 17">Heterodimer with ABCG8.</text>
</comment>
<comment type="subcellular location">
    <subcellularLocation>
        <location evidence="8 17 23">Cell membrane</location>
        <topology evidence="22">Multi-pass membrane protein</topology>
    </subcellularLocation>
    <subcellularLocation>
        <location evidence="8 11 13 16 17">Apical cell membrane</location>
        <topology evidence="22">Multi-pass membrane protein</topology>
    </subcellularLocation>
</comment>
<comment type="tissue specificity">
    <text evidence="5 6 7 9 13 17 19">Detected in liver and jejunum (PubMed:12444248, PubMed:15040800, PubMed:18402465, PubMed:25378657). Detected on enterocyte villi (at protein level) (PubMed:15040800). Expressed in jejunum, ileum and, at lower level, in the liver (PubMed:11099417, PubMed:11138003, PubMed:11907139, PubMed:12444248, PubMed:25378657).</text>
</comment>
<comment type="induction">
    <text evidence="5 10 12">Up-regulated in liver and small intestine by cholesterol feeding (PubMed:11099417). Up-regulated via the oxysterols receptor LXR/retinoic X receptor (LXR/RXR) pathway (PubMed:14657202). Endotoxin (LPS) significantly decreased mRNA levels in the liver but not in the small intestine (PubMed:12777468).</text>
</comment>
<comment type="domain">
    <text evidence="15">The Walker motif (consensus sequence G-X-X-G-X-G-K-[ST]-T) is expected to bind ATP. Within this motif, the conserved Lys is essential for transport activity mediated by the heterodimer with ABCG8.</text>
</comment>
<comment type="PTM">
    <text evidence="8 9 13 14 16 17 19">N-glycosylated (PubMed:12208867, PubMed:12444248, PubMed:15040800, PubMed:15054092, PubMed:16867993, PubMed:18402465, PubMed:25378657). N-glycosylation is important for efficient export out of the endoplasmic reticulum (PubMed:15054092).</text>
</comment>
<comment type="disease">
    <text evidence="18">A spontaneous mutation gives raise to thrombocytopenia and cardiomyopathy (trac), with recessive inheritance and fully penetrant phenotype. Mice are small, infertile, and have shortened lifespan.</text>
</comment>
<comment type="disruption phenotype">
    <text evidence="9 12 19">Mice deficient for both Abcg5 and Abcg8 appear healthy and are fertile, but display strongly increased levels of the food-derived plant sterols sitosterol and campesterol in liver and blood plasma (PubMed:12444248, PubMed:14657202, PubMed:25378657). When mice are fed chow containing 0.02% cholesterol, cholesterol levels in blood plasma and in liver are considerably lower than in wild-type (PubMed:12444248, PubMed:14657202). In spite of the increased plasma and liver levels of plant sterols, and the decreased cholesterol levels, the total sterol levels in plasma and liver are closely similar in wild-type and mutant mice (PubMed:14657202). When mice are fed chow containing 2% cholesterol, plasma cholesterol levels remain stable in wild-type, but increase 2.4-fold in mutant mice. In the liver of mice kept on chow containing 2% cholesterol, cholesterol levels increase 3-fold for wild-type mice and 18-fold for mutant mice, resulting in much higher cholesterol levels than in wild-type livers (PubMed:12444248). Dietary cholesterol absorption appears normal in mutant mice, but the absorption of dietary cholestanol, campesterol and sitosterol is increased (PubMed:12444248). At the same time, mutant mice have very low cholesterol levels in bile, suggesting that the increased hepatic cholesterol levels are due to impaired cholesterol secretion into bile (PubMed:12444248). Likewise, the levels of the food-derived plant sterols stigmasterol, sitosterol, campesterol and brassicasterol are strongly decreased in bile from mutant mice (PubMed:14657202). In contrast, biliary phospholipid and bile acid levels appear unchanged relative to wild-type (PubMed:12444248). The blood plasma of mice with liver-specific or intestine-specific disruption of Abcg5 and Abcg8 has nearly normal levels of cholesterol, and mildly increased levels of sitosterol and campesterol (PubMed:25378657). Mice with intestine-specific disruption of Abcg5 and Abcg8 have strongly increased levels of sitosterol and campesterol in enterocytes, similar to that observed for mice with complete gene disruption (PubMed:25378657). In addition, they display strongly increased levels of sitosterol and campesterol in bile (PubMed:25378657). Mice with liver-specific disruption of Abcg5 and Abcg8 have slightly increased levels of campesterol and sitosterol in the liver, and normal, low levels of sitosterol and campesterol in bile (PubMed:25378657). Enterocytes and liver from mice with liver-specific or intestine-specific disruption of Abcg5 and Abcg8 have normal cholesterol levels (PubMed:25378657).</text>
</comment>
<comment type="similarity">
    <text evidence="22">Belongs to the ABC transporter superfamily. ABCG family. Eye pigment precursor importer (TC 3.A.1.204) subfamily.</text>
</comment>
<proteinExistence type="evidence at protein level"/>
<sequence>MGELPFLSPEGARGPHINRGSLSSLEQGSVTGTEARHSLGVLHVSYSVSNRVGPWWNIKSCQQKWDRQILKDVSLYIESGQIMCILGSSGSGKTTLLDAISGRLRRTGTLEGEVFVNGCELRRDQFQDCFSYVLQSDVFLSSLTVRETLRYTAMLALCRSSADFYNKKVEAVMTELSLSHVADQMIGSYNFGGISSGERRRVSIAAQLLQDPKVMMLDEPTTGLDCMTANQIVLLLAELARRDRIVIVTIHQPRSELFQHFDKIAILTYGELVFCGTPEEMLGFFNNCGYPCPEHSNPFDFYMDLTSVDTQSREREIETYKRVQMLECAFKESDIYHKILENIERARYLKTLPTVPFKTKDPPGMFGKLGVLLRRVTRNLMRNKQAVIMRLVQNLIMGLFLIFYLLRVQNNTLKGAVQDRVGLLYQLVGATPYTGMLNAVNLFPMLRAVSDQESQDGLYHKWQMLLAYVLHVLPFSVIATVIFSSVCYWTLGLYPEVARFGYFSAALLAPHLIGEFLTLVLLGIVQNPNIVNSIVALLSISGLLIGSGFIRNIQEMPIPLKILGYFTFQKYCCEILVVNEFYGLNFTCGGSNTSMLNHPMCAITQGVQFIEKTCPGATSRFTANFLILYGFIPALVILGIVIFKVRDYLISR</sequence>
<feature type="chain" id="PRO_0000093394" description="ATP-binding cassette sub-family G member 5">
    <location>
        <begin position="1"/>
        <end position="652"/>
    </location>
</feature>
<feature type="topological domain" description="Cytoplasmic" evidence="1">
    <location>
        <begin position="1"/>
        <end position="384"/>
    </location>
</feature>
<feature type="transmembrane region" description="Helical; Name=1" evidence="1">
    <location>
        <begin position="385"/>
        <end position="405"/>
    </location>
</feature>
<feature type="topological domain" description="Extracellular" evidence="1">
    <location>
        <begin position="406"/>
        <end position="422"/>
    </location>
</feature>
<feature type="transmembrane region" description="Helical; Name=2" evidence="1">
    <location>
        <begin position="423"/>
        <end position="443"/>
    </location>
</feature>
<feature type="topological domain" description="Cytoplasmic" evidence="1">
    <location>
        <begin position="444"/>
        <end position="468"/>
    </location>
</feature>
<feature type="transmembrane region" description="Helical; Name=3" evidence="1">
    <location>
        <begin position="469"/>
        <end position="490"/>
    </location>
</feature>
<feature type="topological domain" description="Extracellular" evidence="1">
    <location>
        <begin position="491"/>
        <end position="501"/>
    </location>
</feature>
<feature type="transmembrane region" description="Helical; Name=4" evidence="1">
    <location>
        <begin position="502"/>
        <end position="522"/>
    </location>
</feature>
<feature type="topological domain" description="Cytoplasmic" evidence="1">
    <location>
        <begin position="523"/>
        <end position="529"/>
    </location>
</feature>
<feature type="transmembrane region" description="Helical; Name=5" evidence="1">
    <location>
        <begin position="530"/>
        <end position="550"/>
    </location>
</feature>
<feature type="topological domain" description="Extracellular" evidence="1">
    <location>
        <begin position="551"/>
        <end position="624"/>
    </location>
</feature>
<feature type="transmembrane region" description="Helical; Name=6" evidence="1">
    <location>
        <begin position="625"/>
        <end position="645"/>
    </location>
</feature>
<feature type="topological domain" description="Cytoplasmic" evidence="1">
    <location>
        <begin position="646"/>
        <end position="652"/>
    </location>
</feature>
<feature type="domain" description="ABC transporter" evidence="3">
    <location>
        <begin position="39"/>
        <end position="294"/>
    </location>
</feature>
<feature type="domain" description="ABC transmembrane type-2">
    <location>
        <begin position="389"/>
        <end position="646"/>
    </location>
</feature>
<feature type="region of interest" description="Disordered" evidence="4">
    <location>
        <begin position="1"/>
        <end position="25"/>
    </location>
</feature>
<feature type="binding site" evidence="3">
    <location>
        <begin position="87"/>
        <end position="94"/>
    </location>
    <ligand>
        <name>ATP</name>
        <dbReference type="ChEBI" id="CHEBI:30616"/>
    </ligand>
</feature>
<feature type="lipid moiety-binding region" description="S-palmitoyl cysteine" evidence="17">
    <location>
        <position position="61"/>
    </location>
</feature>
<feature type="glycosylation site" description="N-linked (GlcNAc...) asparagine" evidence="2">
    <location>
        <position position="410"/>
    </location>
</feature>
<feature type="glycosylation site" description="N-linked (GlcNAc...) asparagine" evidence="14">
    <location>
        <position position="585"/>
    </location>
</feature>
<feature type="glycosylation site" description="N-linked (GlcNAc...) asparagine" evidence="14">
    <location>
        <position position="592"/>
    </location>
</feature>
<feature type="sequence variant" description="In trac; strongly increased levels of sitosterol, brassicasterol and campesterol in blood plasma." evidence="18">
    <location>
        <begin position="462"/>
        <end position="652"/>
    </location>
</feature>
<feature type="mutagenesis site" description="Abolishes palmitoylation. No effect on function and subcellular location." evidence="17">
    <original>C</original>
    <variation>A</variation>
    <location>
        <position position="61"/>
    </location>
</feature>
<feature type="mutagenesis site" description="Disrupts sterol transport activity. Decreases expression of both ABCG5 and ABCG8." evidence="15 16">
    <original>K</original>
    <variation>M</variation>
    <location>
        <position position="93"/>
    </location>
</feature>
<feature type="mutagenesis site" description="Strongly reduces cholesterol transport activity, but has little effect on biliary secretion of campesterol and sitosterol. No effect on ATP-binding and on expression of ABCG5 and ABCG8." evidence="15">
    <original>K</original>
    <variation>R</variation>
    <location>
        <position position="93"/>
    </location>
</feature>
<feature type="mutagenesis site" description="No effect on cholesterol and sitosterol transport activity; when associated with G-196." evidence="15">
    <original>I</original>
    <variation>V</variation>
    <location>
        <position position="194"/>
    </location>
</feature>
<feature type="mutagenesis site" description="No effect on cholesterol and sitosterol transport activity; when associated with V-194." evidence="15">
    <original>S</original>
    <variation>G</variation>
    <location>
        <position position="196"/>
    </location>
</feature>
<feature type="mutagenesis site" description="No effect on cholesterol and sitosterol transport activity. Mildly reduced expression of ABCG5 and ABCG8." evidence="15">
    <original>G</original>
    <variation>D</variation>
    <location>
        <position position="197"/>
    </location>
</feature>
<feature type="mutagenesis site" description="Decreases expression of both ABCG5 and ABCG8. Disrupts sterol transport activity." evidence="15">
    <original>E</original>
    <variation>D</variation>
    <location>
        <position position="219"/>
    </location>
</feature>
<feature type="mutagenesis site" description="Strongly decreases expression of both ABCG5 and ABCG8. Disrupts sterol transport activity." evidence="15">
    <original>E</original>
    <variation>Q</variation>
    <location>
        <position position="219"/>
    </location>
</feature>
<feature type="mutagenesis site" description="Loss of one N-glycosylation site. Abolishes N-glycosylation; when associated with Q-592." evidence="14">
    <original>N</original>
    <variation>Q</variation>
    <location>
        <position position="585"/>
    </location>
</feature>
<feature type="mutagenesis site" description="Loss of one N-glycosylation site. Abolishes N-glycosylation; when associated with Q-585." evidence="14">
    <original>N</original>
    <variation>Q</variation>
    <location>
        <position position="592"/>
    </location>
</feature>
<protein>
    <recommendedName>
        <fullName evidence="22">ATP-binding cassette sub-family G member 5</fullName>
        <ecNumber evidence="16">7.6.2.-</ecNumber>
    </recommendedName>
    <alternativeName>
        <fullName evidence="20 21">Sterolin-1</fullName>
    </alternativeName>
</protein>
<gene>
    <name evidence="27" type="primary">Abcg5</name>
</gene>